<gene>
    <name evidence="7" type="primary">RBM3</name>
</gene>
<feature type="chain" id="PRO_0000434651" description="RNA-binding protein 3">
    <location>
        <begin position="1"/>
        <end position="160"/>
    </location>
</feature>
<feature type="domain" description="RRM" evidence="4">
    <location>
        <begin position="6"/>
        <end position="84"/>
    </location>
</feature>
<feature type="region of interest" description="Disordered" evidence="5">
    <location>
        <begin position="81"/>
        <end position="116"/>
    </location>
</feature>
<feature type="region of interest" description="Disordered" evidence="5">
    <location>
        <begin position="135"/>
        <end position="160"/>
    </location>
</feature>
<feature type="compositionally biased region" description="Gly residues" evidence="5">
    <location>
        <begin position="103"/>
        <end position="114"/>
    </location>
</feature>
<feature type="modified residue" description="Omega-N-methylarginine" evidence="2">
    <location>
        <position position="47"/>
    </location>
</feature>
<feature type="modified residue" description="Asymmetric dimethylarginine; alternate" evidence="1">
    <location>
        <position position="105"/>
    </location>
</feature>
<feature type="modified residue" description="Dimethylated arginine; alternate" evidence="2">
    <location>
        <position position="105"/>
    </location>
</feature>
<feature type="modified residue" description="Omega-N-methylarginine; alternate" evidence="2">
    <location>
        <position position="105"/>
    </location>
</feature>
<feature type="modified residue" description="Omega-N-methylarginine" evidence="2">
    <location>
        <position position="120"/>
    </location>
</feature>
<feature type="modified residue" description="Omega-N-methylarginine" evidence="2">
    <location>
        <position position="134"/>
    </location>
</feature>
<feature type="modified residue" description="Phosphoserine" evidence="2">
    <location>
        <position position="150"/>
    </location>
</feature>
<feature type="modified residue" description="Phosphotyrosine" evidence="2">
    <location>
        <position position="158"/>
    </location>
</feature>
<feature type="splice variant" id="VSP_057972" description="In isoform 2.">
    <original>SLDGRQIRVDHAGKSARGSR</original>
    <variation>GVEGSGRQSRAAWEATTGPA</variation>
    <location>
        <begin position="71"/>
        <end position="90"/>
    </location>
</feature>
<feature type="splice variant" id="VSP_057973" description="In isoform 2.">
    <location>
        <begin position="91"/>
        <end position="160"/>
    </location>
</feature>
<organism>
    <name type="scientific">Capra hircus</name>
    <name type="common">Goat</name>
    <dbReference type="NCBI Taxonomy" id="9925"/>
    <lineage>
        <taxon>Eukaryota</taxon>
        <taxon>Metazoa</taxon>
        <taxon>Chordata</taxon>
        <taxon>Craniata</taxon>
        <taxon>Vertebrata</taxon>
        <taxon>Euteleostomi</taxon>
        <taxon>Mammalia</taxon>
        <taxon>Eutheria</taxon>
        <taxon>Laurasiatheria</taxon>
        <taxon>Artiodactyla</taxon>
        <taxon>Ruminantia</taxon>
        <taxon>Pecora</taxon>
        <taxon>Bovidae</taxon>
        <taxon>Caprinae</taxon>
        <taxon>Capra</taxon>
    </lineage>
</organism>
<proteinExistence type="evidence at transcript level"/>
<accession>W8E7I1</accession>
<keyword id="KW-0025">Alternative splicing</keyword>
<keyword id="KW-0966">Cell projection</keyword>
<keyword id="KW-0963">Cytoplasm</keyword>
<keyword id="KW-0488">Methylation</keyword>
<keyword id="KW-0539">Nucleus</keyword>
<keyword id="KW-0597">Phosphoprotein</keyword>
<keyword id="KW-1185">Reference proteome</keyword>
<keyword id="KW-0694">RNA-binding</keyword>
<keyword id="KW-0346">Stress response</keyword>
<sequence length="160" mass="17526">MSSEEGKLFVGGLNFNTDERALEDHFSSFGPISEVVVVKDRETQRSRGFGFITFTNPEHASNAMRAMNGESLDGRQIRVDHAGKSARGSRGGAFGSYERGRGYPRGGGDQGYGSGRYDNRPGAYGFGYGYGYGRSRDYGGRSQGGYDRYSGGNYRDNYDN</sequence>
<comment type="function">
    <text evidence="1">Cold-inducible mRNA binding protein that enhances global protein synthesis at both physiological and mild hypothermic temperatures. Reduces the relative abundance of microRNAs, when overexpressed. Enhances phosphorylation of translation initiation factors and active polysome formation.</text>
</comment>
<comment type="subunit">
    <text evidence="3">Interacts with RPL4. Associates with the 60S ribosomal subunits.</text>
</comment>
<comment type="subcellular location">
    <subcellularLocation>
        <location evidence="3">Nucleus</location>
    </subcellularLocation>
    <subcellularLocation>
        <location evidence="3">Cytoplasm</location>
    </subcellularLocation>
    <subcellularLocation>
        <location evidence="3">Cell projection</location>
        <location evidence="3">Dendrite</location>
    </subcellularLocation>
    <text evidence="3">Localizes in mRNA granules in dentrites.</text>
</comment>
<comment type="alternative products">
    <event type="alternative splicing"/>
    <isoform>
        <id>W8E7I1-1</id>
        <name>1</name>
        <sequence type="displayed"/>
    </isoform>
    <isoform>
        <id>W8E7I1-2</id>
        <name>2</name>
        <sequence type="described" ref="VSP_057972 VSP_057973"/>
    </isoform>
</comment>
<comment type="induction">
    <molecule>Isoform 2</molecule>
    <text evidence="6">Up-regulated significantly higher under moderate hypothermic stress conditions (25-30 degrees Celsius) than under deep hypothermia (10-15 degrees Celsius).</text>
</comment>
<reference key="1">
    <citation type="journal article" date="2015" name="Res. Vet. Sci.">
        <title>Molecular characterization of RNA binding motif protein 3 (RBM3) gene from Pashmina goat.</title>
        <authorList>
            <person name="Zargar R."/>
            <person name="Urwat U."/>
            <person name="Malik F."/>
            <person name="Shah R.A."/>
            <person name="Bhat M.H."/>
            <person name="Naykoo N.A."/>
            <person name="Khan F."/>
            <person name="Khan H.M."/>
            <person name="Ahmed S.M."/>
            <person name="Vijh R.K."/>
            <person name="Ganai N.A."/>
        </authorList>
    </citation>
    <scope>NUCLEOTIDE SEQUENCE [MRNA] (ISOFORM 2)</scope>
    <scope>INDUCTION (ISOFORM 2)</scope>
    <scope>PHYLOGENETIC ANALYSIS</scope>
    <source>
        <tissue evidence="7">Blood</tissue>
    </source>
</reference>
<reference key="2">
    <citation type="journal article" date="2013" name="Nat. Biotechnol.">
        <title>Sequencing and automated whole-genome optical mapping of the genome of a domestic goat (Capra hircus).</title>
        <authorList>
            <person name="Dong Y."/>
            <person name="Xie M."/>
            <person name="Jiang Y."/>
            <person name="Xiao N."/>
            <person name="Du X."/>
            <person name="Zhang W."/>
            <person name="Tosser-Klopp G."/>
            <person name="Wang J."/>
            <person name="Yang S."/>
            <person name="Liang J."/>
            <person name="Chen W."/>
            <person name="Chen J."/>
            <person name="Zeng P."/>
            <person name="Hou Y."/>
            <person name="Bian C."/>
            <person name="Pan S."/>
            <person name="Li Y."/>
            <person name="Liu X."/>
            <person name="Wang W."/>
            <person name="Servin B."/>
            <person name="Sayre B."/>
            <person name="Zhu B."/>
            <person name="Sweeney D."/>
            <person name="Moore R."/>
            <person name="Nie W."/>
            <person name="Shen Y."/>
            <person name="Zhao R."/>
            <person name="Zhang G."/>
            <person name="Li J."/>
            <person name="Faraut T."/>
            <person name="Womack J."/>
            <person name="Zhang Y."/>
            <person name="Kijas J."/>
            <person name="Cockett N."/>
            <person name="Xu X."/>
            <person name="Zhao S."/>
            <person name="Wang J."/>
            <person name="Wang W."/>
        </authorList>
    </citation>
    <scope>NUCLEOTIDE SEQUENCE [LARGE SCALE GENOMIC DNA]</scope>
</reference>
<evidence type="ECO:0000250" key="1">
    <source>
        <dbReference type="UniProtKB" id="O89086"/>
    </source>
</evidence>
<evidence type="ECO:0000250" key="2">
    <source>
        <dbReference type="UniProtKB" id="P98179"/>
    </source>
</evidence>
<evidence type="ECO:0000250" key="3">
    <source>
        <dbReference type="UniProtKB" id="Q925G0"/>
    </source>
</evidence>
<evidence type="ECO:0000255" key="4">
    <source>
        <dbReference type="PROSITE-ProRule" id="PRU00176"/>
    </source>
</evidence>
<evidence type="ECO:0000256" key="5">
    <source>
        <dbReference type="SAM" id="MobiDB-lite"/>
    </source>
</evidence>
<evidence type="ECO:0000269" key="6">
    <source>
    </source>
</evidence>
<evidence type="ECO:0000303" key="7">
    <source>
    </source>
</evidence>
<evidence type="ECO:0000312" key="8">
    <source>
        <dbReference type="EMBL" id="AHJ80940.1"/>
    </source>
</evidence>
<name>RBM3_CAPHI</name>
<dbReference type="EMBL" id="KF933377">
    <property type="protein sequence ID" value="AHJ80940.1"/>
    <property type="molecule type" value="mRNA"/>
</dbReference>
<dbReference type="EMBL" id="AJPT01242208">
    <property type="status" value="NOT_ANNOTATED_CDS"/>
    <property type="molecule type" value="Genomic_DNA"/>
</dbReference>
<dbReference type="RefSeq" id="XP_005700842.1">
    <molecule id="W8E7I1-1"/>
    <property type="nucleotide sequence ID" value="XM_005700785.3"/>
</dbReference>
<dbReference type="RefSeq" id="XP_005700843.1">
    <molecule id="W8E7I1-1"/>
    <property type="nucleotide sequence ID" value="XM_005700786.3"/>
</dbReference>
<dbReference type="RefSeq" id="XP_013831916.1">
    <molecule id="W8E7I1-1"/>
    <property type="nucleotide sequence ID" value="XM_013976462.2"/>
</dbReference>
<dbReference type="SMR" id="W8E7I1"/>
<dbReference type="STRING" id="9925.ENSCHIP00000004879"/>
<dbReference type="Ensembl" id="ENSCHIT00000012418.1">
    <molecule id="W8E7I1-1"/>
    <property type="protein sequence ID" value="ENSCHIP00000004879.1"/>
    <property type="gene ID" value="ENSCHIG00000009007.1"/>
</dbReference>
<dbReference type="GeneID" id="102176209"/>
<dbReference type="KEGG" id="chx:102176209"/>
<dbReference type="CTD" id="5935"/>
<dbReference type="GeneTree" id="ENSGT00940000153524"/>
<dbReference type="OMA" id="FIEMADD"/>
<dbReference type="OrthoDB" id="4207594at2759"/>
<dbReference type="Proteomes" id="UP000291000">
    <property type="component" value="Unassembled WGS sequence"/>
</dbReference>
<dbReference type="Proteomes" id="UP000694566">
    <property type="component" value="Unplaced"/>
</dbReference>
<dbReference type="Bgee" id="ENSCHIG00000009007">
    <property type="expression patterns" value="Expressed in ovary and 18 other cell types or tissues"/>
</dbReference>
<dbReference type="GO" id="GO:0005737">
    <property type="term" value="C:cytoplasm"/>
    <property type="evidence" value="ECO:0000250"/>
    <property type="project" value="UniProtKB"/>
</dbReference>
<dbReference type="GO" id="GO:0030425">
    <property type="term" value="C:dendrite"/>
    <property type="evidence" value="ECO:0000250"/>
    <property type="project" value="UniProtKB"/>
</dbReference>
<dbReference type="GO" id="GO:0005654">
    <property type="term" value="C:nucleoplasm"/>
    <property type="evidence" value="ECO:0007669"/>
    <property type="project" value="Ensembl"/>
</dbReference>
<dbReference type="GO" id="GO:0005634">
    <property type="term" value="C:nucleus"/>
    <property type="evidence" value="ECO:0000250"/>
    <property type="project" value="UniProtKB"/>
</dbReference>
<dbReference type="GO" id="GO:0043023">
    <property type="term" value="F:ribosomal large subunit binding"/>
    <property type="evidence" value="ECO:0000250"/>
    <property type="project" value="UniProtKB"/>
</dbReference>
<dbReference type="GO" id="GO:0003723">
    <property type="term" value="F:RNA binding"/>
    <property type="evidence" value="ECO:0007669"/>
    <property type="project" value="UniProtKB-KW"/>
</dbReference>
<dbReference type="GO" id="GO:0070417">
    <property type="term" value="P:cellular response to cold"/>
    <property type="evidence" value="ECO:0000270"/>
    <property type="project" value="UniProtKB"/>
</dbReference>
<dbReference type="GO" id="GO:0009631">
    <property type="term" value="P:cold acclimation"/>
    <property type="evidence" value="ECO:0000270"/>
    <property type="project" value="UniProtKB"/>
</dbReference>
<dbReference type="GO" id="GO:0045727">
    <property type="term" value="P:positive regulation of translation"/>
    <property type="evidence" value="ECO:0000250"/>
    <property type="project" value="UniProtKB"/>
</dbReference>
<dbReference type="GO" id="GO:0006417">
    <property type="term" value="P:regulation of translation"/>
    <property type="evidence" value="ECO:0000250"/>
    <property type="project" value="UniProtKB"/>
</dbReference>
<dbReference type="GO" id="GO:0009409">
    <property type="term" value="P:response to cold"/>
    <property type="evidence" value="ECO:0000250"/>
    <property type="project" value="UniProtKB"/>
</dbReference>
<dbReference type="CDD" id="cd12449">
    <property type="entry name" value="RRM_CIRBP_RBM3"/>
    <property type="match status" value="1"/>
</dbReference>
<dbReference type="FunFam" id="3.30.70.330:FF:000312">
    <property type="entry name" value="RNA-binding protein 3 isoform X1"/>
    <property type="match status" value="1"/>
</dbReference>
<dbReference type="Gene3D" id="3.30.70.330">
    <property type="match status" value="1"/>
</dbReference>
<dbReference type="InterPro" id="IPR012677">
    <property type="entry name" value="Nucleotide-bd_a/b_plait_sf"/>
</dbReference>
<dbReference type="InterPro" id="IPR035979">
    <property type="entry name" value="RBD_domain_sf"/>
</dbReference>
<dbReference type="InterPro" id="IPR050441">
    <property type="entry name" value="RBM"/>
</dbReference>
<dbReference type="InterPro" id="IPR034278">
    <property type="entry name" value="RBM3/CIRBP_RRM"/>
</dbReference>
<dbReference type="InterPro" id="IPR000504">
    <property type="entry name" value="RRM_dom"/>
</dbReference>
<dbReference type="PANTHER" id="PTHR48034">
    <property type="entry name" value="TRANSFORMER-2 SEX-DETERMINING PROTEIN-RELATED"/>
    <property type="match status" value="1"/>
</dbReference>
<dbReference type="Pfam" id="PF00076">
    <property type="entry name" value="RRM_1"/>
    <property type="match status" value="1"/>
</dbReference>
<dbReference type="SMART" id="SM00360">
    <property type="entry name" value="RRM"/>
    <property type="match status" value="1"/>
</dbReference>
<dbReference type="SUPFAM" id="SSF54928">
    <property type="entry name" value="RNA-binding domain, RBD"/>
    <property type="match status" value="1"/>
</dbReference>
<dbReference type="PROSITE" id="PS50102">
    <property type="entry name" value="RRM"/>
    <property type="match status" value="1"/>
</dbReference>
<protein>
    <recommendedName>
        <fullName evidence="8">RNA-binding protein 3</fullName>
    </recommendedName>
    <alternativeName>
        <fullName evidence="7">RNA-binding motif protein 3</fullName>
    </alternativeName>
</protein>